<name>AL1A2_HUMAN</name>
<keyword id="KW-0002">3D-structure</keyword>
<keyword id="KW-0025">Alternative splicing</keyword>
<keyword id="KW-0963">Cytoplasm</keyword>
<keyword id="KW-0225">Disease variant</keyword>
<keyword id="KW-0443">Lipid metabolism</keyword>
<keyword id="KW-0520">NAD</keyword>
<keyword id="KW-0560">Oxidoreductase</keyword>
<keyword id="KW-0597">Phosphoprotein</keyword>
<keyword id="KW-1267">Proteomics identification</keyword>
<keyword id="KW-1185">Reference proteome</keyword>
<reference key="1">
    <citation type="journal article" date="1998" name="Mol. Cell. Biol.">
        <title>TAL1 and LIM-only proteins synergistically induce retinaldehyde dehydrogenase 2 expression in T-cell acute lymphoblastic leukemia by acting as cofactors for GATA3.</title>
        <authorList>
            <person name="Ono Y."/>
            <person name="Fukuhara N."/>
            <person name="Yoshie O."/>
        </authorList>
    </citation>
    <scope>NUCLEOTIDE SEQUENCE [MRNA] (ISOFORMS 1 AND 4)</scope>
    <scope>VARIANT ILE-348</scope>
</reference>
<reference key="2">
    <citation type="journal article" date="2004" name="Nat. Genet.">
        <title>Complete sequencing and characterization of 21,243 full-length human cDNAs.</title>
        <authorList>
            <person name="Ota T."/>
            <person name="Suzuki Y."/>
            <person name="Nishikawa T."/>
            <person name="Otsuki T."/>
            <person name="Sugiyama T."/>
            <person name="Irie R."/>
            <person name="Wakamatsu A."/>
            <person name="Hayashi K."/>
            <person name="Sato H."/>
            <person name="Nagai K."/>
            <person name="Kimura K."/>
            <person name="Makita H."/>
            <person name="Sekine M."/>
            <person name="Obayashi M."/>
            <person name="Nishi T."/>
            <person name="Shibahara T."/>
            <person name="Tanaka T."/>
            <person name="Ishii S."/>
            <person name="Yamamoto J."/>
            <person name="Saito K."/>
            <person name="Kawai Y."/>
            <person name="Isono Y."/>
            <person name="Nakamura Y."/>
            <person name="Nagahari K."/>
            <person name="Murakami K."/>
            <person name="Yasuda T."/>
            <person name="Iwayanagi T."/>
            <person name="Wagatsuma M."/>
            <person name="Shiratori A."/>
            <person name="Sudo H."/>
            <person name="Hosoiri T."/>
            <person name="Kaku Y."/>
            <person name="Kodaira H."/>
            <person name="Kondo H."/>
            <person name="Sugawara M."/>
            <person name="Takahashi M."/>
            <person name="Kanda K."/>
            <person name="Yokoi T."/>
            <person name="Furuya T."/>
            <person name="Kikkawa E."/>
            <person name="Omura Y."/>
            <person name="Abe K."/>
            <person name="Kamihara K."/>
            <person name="Katsuta N."/>
            <person name="Sato K."/>
            <person name="Tanikawa M."/>
            <person name="Yamazaki M."/>
            <person name="Ninomiya K."/>
            <person name="Ishibashi T."/>
            <person name="Yamashita H."/>
            <person name="Murakawa K."/>
            <person name="Fujimori K."/>
            <person name="Tanai H."/>
            <person name="Kimata M."/>
            <person name="Watanabe M."/>
            <person name="Hiraoka S."/>
            <person name="Chiba Y."/>
            <person name="Ishida S."/>
            <person name="Ono Y."/>
            <person name="Takiguchi S."/>
            <person name="Watanabe S."/>
            <person name="Yosida M."/>
            <person name="Hotuta T."/>
            <person name="Kusano J."/>
            <person name="Kanehori K."/>
            <person name="Takahashi-Fujii A."/>
            <person name="Hara H."/>
            <person name="Tanase T.-O."/>
            <person name="Nomura Y."/>
            <person name="Togiya S."/>
            <person name="Komai F."/>
            <person name="Hara R."/>
            <person name="Takeuchi K."/>
            <person name="Arita M."/>
            <person name="Imose N."/>
            <person name="Musashino K."/>
            <person name="Yuuki H."/>
            <person name="Oshima A."/>
            <person name="Sasaki N."/>
            <person name="Aotsuka S."/>
            <person name="Yoshikawa Y."/>
            <person name="Matsunawa H."/>
            <person name="Ichihara T."/>
            <person name="Shiohata N."/>
            <person name="Sano S."/>
            <person name="Moriya S."/>
            <person name="Momiyama H."/>
            <person name="Satoh N."/>
            <person name="Takami S."/>
            <person name="Terashima Y."/>
            <person name="Suzuki O."/>
            <person name="Nakagawa S."/>
            <person name="Senoh A."/>
            <person name="Mizoguchi H."/>
            <person name="Goto Y."/>
            <person name="Shimizu F."/>
            <person name="Wakebe H."/>
            <person name="Hishigaki H."/>
            <person name="Watanabe T."/>
            <person name="Sugiyama A."/>
            <person name="Takemoto M."/>
            <person name="Kawakami B."/>
            <person name="Yamazaki M."/>
            <person name="Watanabe K."/>
            <person name="Kumagai A."/>
            <person name="Itakura S."/>
            <person name="Fukuzumi Y."/>
            <person name="Fujimori Y."/>
            <person name="Komiyama M."/>
            <person name="Tashiro H."/>
            <person name="Tanigami A."/>
            <person name="Fujiwara T."/>
            <person name="Ono T."/>
            <person name="Yamada K."/>
            <person name="Fujii Y."/>
            <person name="Ozaki K."/>
            <person name="Hirao M."/>
            <person name="Ohmori Y."/>
            <person name="Kawabata A."/>
            <person name="Hikiji T."/>
            <person name="Kobatake N."/>
            <person name="Inagaki H."/>
            <person name="Ikema Y."/>
            <person name="Okamoto S."/>
            <person name="Okitani R."/>
            <person name="Kawakami T."/>
            <person name="Noguchi S."/>
            <person name="Itoh T."/>
            <person name="Shigeta K."/>
            <person name="Senba T."/>
            <person name="Matsumura K."/>
            <person name="Nakajima Y."/>
            <person name="Mizuno T."/>
            <person name="Morinaga M."/>
            <person name="Sasaki M."/>
            <person name="Togashi T."/>
            <person name="Oyama M."/>
            <person name="Hata H."/>
            <person name="Watanabe M."/>
            <person name="Komatsu T."/>
            <person name="Mizushima-Sugano J."/>
            <person name="Satoh T."/>
            <person name="Shirai Y."/>
            <person name="Takahashi Y."/>
            <person name="Nakagawa K."/>
            <person name="Okumura K."/>
            <person name="Nagase T."/>
            <person name="Nomura N."/>
            <person name="Kikuchi H."/>
            <person name="Masuho Y."/>
            <person name="Yamashita R."/>
            <person name="Nakai K."/>
            <person name="Yada T."/>
            <person name="Nakamura Y."/>
            <person name="Ohara O."/>
            <person name="Isogai T."/>
            <person name="Sugano S."/>
        </authorList>
    </citation>
    <scope>NUCLEOTIDE SEQUENCE [LARGE SCALE MRNA] (ISOFORMS 1 AND 3)</scope>
    <scope>VARIANT ILE-348</scope>
    <source>
        <tissue>Testis</tissue>
        <tissue>Uterus</tissue>
    </source>
</reference>
<reference key="3">
    <citation type="submission" date="2005-12" db="EMBL/GenBank/DDBJ databases">
        <authorList>
            <consortium name="NIEHS SNPs program"/>
        </authorList>
    </citation>
    <scope>NUCLEOTIDE SEQUENCE [GENOMIC DNA]</scope>
    <scope>VARIANTS GLY-50; VAL-110; ILE-348 AND LYS-436</scope>
</reference>
<reference key="4">
    <citation type="journal article" date="2006" name="Nature">
        <title>Analysis of the DNA sequence and duplication history of human chromosome 15.</title>
        <authorList>
            <person name="Zody M.C."/>
            <person name="Garber M."/>
            <person name="Sharpe T."/>
            <person name="Young S.K."/>
            <person name="Rowen L."/>
            <person name="O'Neill K."/>
            <person name="Whittaker C.A."/>
            <person name="Kamal M."/>
            <person name="Chang J.L."/>
            <person name="Cuomo C.A."/>
            <person name="Dewar K."/>
            <person name="FitzGerald M.G."/>
            <person name="Kodira C.D."/>
            <person name="Madan A."/>
            <person name="Qin S."/>
            <person name="Yang X."/>
            <person name="Abbasi N."/>
            <person name="Abouelleil A."/>
            <person name="Arachchi H.M."/>
            <person name="Baradarani L."/>
            <person name="Birditt B."/>
            <person name="Bloom S."/>
            <person name="Bloom T."/>
            <person name="Borowsky M.L."/>
            <person name="Burke J."/>
            <person name="Butler J."/>
            <person name="Cook A."/>
            <person name="DeArellano K."/>
            <person name="DeCaprio D."/>
            <person name="Dorris L. III"/>
            <person name="Dors M."/>
            <person name="Eichler E.E."/>
            <person name="Engels R."/>
            <person name="Fahey J."/>
            <person name="Fleetwood P."/>
            <person name="Friedman C."/>
            <person name="Gearin G."/>
            <person name="Hall J.L."/>
            <person name="Hensley G."/>
            <person name="Johnson E."/>
            <person name="Jones C."/>
            <person name="Kamat A."/>
            <person name="Kaur A."/>
            <person name="Locke D.P."/>
            <person name="Madan A."/>
            <person name="Munson G."/>
            <person name="Jaffe D.B."/>
            <person name="Lui A."/>
            <person name="Macdonald P."/>
            <person name="Mauceli E."/>
            <person name="Naylor J.W."/>
            <person name="Nesbitt R."/>
            <person name="Nicol R."/>
            <person name="O'Leary S.B."/>
            <person name="Ratcliffe A."/>
            <person name="Rounsley S."/>
            <person name="She X."/>
            <person name="Sneddon K.M.B."/>
            <person name="Stewart S."/>
            <person name="Sougnez C."/>
            <person name="Stone S.M."/>
            <person name="Topham K."/>
            <person name="Vincent D."/>
            <person name="Wang S."/>
            <person name="Zimmer A.R."/>
            <person name="Birren B.W."/>
            <person name="Hood L."/>
            <person name="Lander E.S."/>
            <person name="Nusbaum C."/>
        </authorList>
    </citation>
    <scope>NUCLEOTIDE SEQUENCE [LARGE SCALE GENOMIC DNA]</scope>
</reference>
<reference key="5">
    <citation type="journal article" date="2004" name="Genome Res.">
        <title>The status, quality, and expansion of the NIH full-length cDNA project: the Mammalian Gene Collection (MGC).</title>
        <authorList>
            <consortium name="The MGC Project Team"/>
        </authorList>
    </citation>
    <scope>NUCLEOTIDE SEQUENCE [LARGE SCALE MRNA] (ISOFORM 2)</scope>
    <source>
        <tissue>Testis</tissue>
    </source>
</reference>
<reference key="6">
    <citation type="journal article" date="2007" name="BMC Genomics">
        <title>The full-ORF clone resource of the German cDNA consortium.</title>
        <authorList>
            <person name="Bechtel S."/>
            <person name="Rosenfelder H."/>
            <person name="Duda A."/>
            <person name="Schmidt C.P."/>
            <person name="Ernst U."/>
            <person name="Wellenreuther R."/>
            <person name="Mehrle A."/>
            <person name="Schuster C."/>
            <person name="Bahr A."/>
            <person name="Bloecker H."/>
            <person name="Heubner D."/>
            <person name="Hoerlein A."/>
            <person name="Michel G."/>
            <person name="Wedler H."/>
            <person name="Koehrer K."/>
            <person name="Ottenwaelder B."/>
            <person name="Poustka A."/>
            <person name="Wiemann S."/>
            <person name="Schupp I."/>
        </authorList>
    </citation>
    <scope>NUCLEOTIDE SEQUENCE [LARGE SCALE MRNA] OF 302-518 (ISOFORMS 1/2)</scope>
    <scope>VARIANT ILE-348</scope>
    <source>
        <tissue>Testis</tissue>
    </source>
</reference>
<reference key="7">
    <citation type="journal article" date="2012" name="Biol. Reprod.">
        <title>Initiating meiosis: the case for retinoic acid.</title>
        <authorList>
            <person name="Griswold M.D."/>
            <person name="Hogarth C.A."/>
            <person name="Bowles J."/>
            <person name="Koopman P."/>
        </authorList>
    </citation>
    <scope>FUNCTION</scope>
</reference>
<reference key="8">
    <citation type="journal article" date="2011" name="BMC Syst. Biol.">
        <title>Initial characterization of the human central proteome.</title>
        <authorList>
            <person name="Burkard T.R."/>
            <person name="Planyavsky M."/>
            <person name="Kaupe I."/>
            <person name="Breitwieser F.P."/>
            <person name="Buerckstuemmer T."/>
            <person name="Bennett K.L."/>
            <person name="Superti-Furga G."/>
            <person name="Colinge J."/>
        </authorList>
    </citation>
    <scope>IDENTIFICATION BY MASS SPECTROMETRY [LARGE SCALE ANALYSIS]</scope>
</reference>
<reference key="9">
    <citation type="journal article" date="2013" name="J. Proteome Res.">
        <title>Toward a comprehensive characterization of a human cancer cell phosphoproteome.</title>
        <authorList>
            <person name="Zhou H."/>
            <person name="Di Palma S."/>
            <person name="Preisinger C."/>
            <person name="Peng M."/>
            <person name="Polat A.N."/>
            <person name="Heck A.J."/>
            <person name="Mohammed S."/>
        </authorList>
    </citation>
    <scope>PHOSPHORYLATION [LARGE SCALE ANALYSIS] AT TYR-168 AND SER-351</scope>
    <scope>IDENTIFICATION BY MASS SPECTROMETRY [LARGE SCALE ANALYSIS]</scope>
    <source>
        <tissue>Erythroleukemia</tissue>
    </source>
</reference>
<reference key="10">
    <citation type="journal article" date="2021" name="Hum. Mutat.">
        <title>Biallelic hypomorphic variants in ALDH1A2 cause a novel lethal human multiple congenital anomaly syndrome encompassing diaphragmatic, pulmonary, and cardiovascular defects.</title>
        <authorList>
            <person name="Beecroft S.J."/>
            <person name="Ayala M."/>
            <person name="McGillivray G."/>
            <person name="Nanda V."/>
            <person name="Agolini E."/>
            <person name="Novelli A."/>
            <person name="Digilio M.C."/>
            <person name="Dotta A."/>
            <person name="Carrozzo R."/>
            <person name="Clayton J."/>
            <person name="Gaffney L."/>
            <person name="McLean C.A."/>
            <person name="Ng J."/>
            <person name="Laing N.G."/>
            <person name="Matteson P."/>
            <person name="Millonig J."/>
            <person name="Ravenscroft G."/>
        </authorList>
    </citation>
    <scope>INVOLVEMENT IN DIH4</scope>
    <scope>VARIANTS DIH4 LYS-182; HIS-347; THR-383 AND TYR-461</scope>
    <scope>CHARACTERIZATION OF VARIANTS DIH4 LYS-182; HIS-347; THR-383 AND TYR-461</scope>
    <scope>FUNCTION</scope>
    <scope>CATALYTIC ACTIVITY</scope>
</reference>
<reference evidence="19" key="11">
    <citation type="submission" date="2014-11" db="PDB data bank">
        <title>Synthesis and in vitro testing of bisdichloroacetyldiamine analogs for use as a reversible male contraceptive.</title>
        <authorList>
            <person name="Goldstein A.S."/>
            <person name="Paik J."/>
            <person name="Moreb J."/>
            <person name="Haenisch M."/>
            <person name="Le Trong I."/>
            <person name="Stenkamp R.E."/>
            <person name="Petrie A.G."/>
            <person name="Smith N."/>
            <person name="Mallochowski W.P."/>
            <person name="Amory J.K."/>
        </authorList>
    </citation>
    <scope>X-RAY CRYSTALLOGRAPHY (2.94 ANGSTROMS) OF 21-518 IN COMPLEX WITH NAD</scope>
</reference>
<reference evidence="20 21 22 23" key="12">
    <citation type="journal article" date="2018" name="ACS Chem. Biol.">
        <title>Structural Basis of ALDH1A2 Inhibition by Irreversible and Reversible Small Molecule Inhibitors.</title>
        <authorList>
            <person name="Chen Y."/>
            <person name="Zhu J.Y."/>
            <person name="Hong K.H."/>
            <person name="Mikles D.C."/>
            <person name="Georg G.I."/>
            <person name="Goldstein A.S."/>
            <person name="Amory J.K."/>
            <person name="Schonbrunn E."/>
        </authorList>
    </citation>
    <scope>X-RAY CRYSTALLOGRAPHY (1.89 ANGSTROMS) OF 26-518 IN COMPLEXES WITH NAD AND SYNTHETIC INHIBITORS</scope>
    <scope>FUNCTION</scope>
    <scope>CATALYTIC ACTIVITY</scope>
    <scope>SUBUNIT</scope>
    <scope>ACTIVE SITE</scope>
    <scope>PATHWAY</scope>
</reference>
<reference key="13">
    <citation type="journal article" date="2023" name="Am. J. Med. Genet. A">
        <title>ALDH1A2-related disorder: A new genetic syndrome due to alteration of the retinoic acid pathway.</title>
        <authorList>
            <person name="Leon E."/>
            <person name="Nde C."/>
            <person name="Ray R.S."/>
            <person name="Preciado D."/>
            <person name="Zohn I.E."/>
        </authorList>
    </citation>
    <scope>VARIANT DIH4 HIS-347</scope>
    <scope>CHARACTERIZATION OF VARIANT DIH4 HIS-347</scope>
</reference>
<dbReference type="EC" id="1.2.1.36" evidence="8"/>
<dbReference type="EMBL" id="AB015226">
    <property type="protein sequence ID" value="BAA34785.1"/>
    <property type="molecule type" value="mRNA"/>
</dbReference>
<dbReference type="EMBL" id="AB015227">
    <property type="protein sequence ID" value="BAA34786.1"/>
    <property type="molecule type" value="mRNA"/>
</dbReference>
<dbReference type="EMBL" id="AB015228">
    <property type="protein sequence ID" value="BAA34787.1"/>
    <property type="molecule type" value="mRNA"/>
</dbReference>
<dbReference type="EMBL" id="AK128709">
    <property type="protein sequence ID" value="BAG54714.1"/>
    <property type="molecule type" value="mRNA"/>
</dbReference>
<dbReference type="EMBL" id="AK303057">
    <property type="protein sequence ID" value="BAG64174.1"/>
    <property type="molecule type" value="mRNA"/>
</dbReference>
<dbReference type="EMBL" id="DQ322171">
    <property type="protein sequence ID" value="ABC40749.1"/>
    <property type="molecule type" value="Genomic_DNA"/>
</dbReference>
<dbReference type="EMBL" id="AC012653">
    <property type="status" value="NOT_ANNOTATED_CDS"/>
    <property type="molecule type" value="Genomic_DNA"/>
</dbReference>
<dbReference type="EMBL" id="AC018904">
    <property type="status" value="NOT_ANNOTATED_CDS"/>
    <property type="molecule type" value="Genomic_DNA"/>
</dbReference>
<dbReference type="EMBL" id="AC025431">
    <property type="status" value="NOT_ANNOTATED_CDS"/>
    <property type="molecule type" value="Genomic_DNA"/>
</dbReference>
<dbReference type="EMBL" id="AC066616">
    <property type="status" value="NOT_ANNOTATED_CDS"/>
    <property type="molecule type" value="Genomic_DNA"/>
</dbReference>
<dbReference type="EMBL" id="AC084781">
    <property type="status" value="NOT_ANNOTATED_CDS"/>
    <property type="molecule type" value="Genomic_DNA"/>
</dbReference>
<dbReference type="EMBL" id="BC030589">
    <property type="protein sequence ID" value="AAH30589.1"/>
    <property type="molecule type" value="mRNA"/>
</dbReference>
<dbReference type="EMBL" id="AL110299">
    <property type="protein sequence ID" value="CAB53740.2"/>
    <property type="molecule type" value="mRNA"/>
</dbReference>
<dbReference type="CCDS" id="CCDS10163.1">
    <molecule id="O94788-1"/>
</dbReference>
<dbReference type="CCDS" id="CCDS10164.1">
    <molecule id="O94788-2"/>
</dbReference>
<dbReference type="CCDS" id="CCDS45266.1">
    <molecule id="O94788-4"/>
</dbReference>
<dbReference type="CCDS" id="CCDS55968.1">
    <molecule id="O94788-3"/>
</dbReference>
<dbReference type="PIR" id="T14799">
    <property type="entry name" value="T14799"/>
</dbReference>
<dbReference type="RefSeq" id="NP_001193826.1">
    <molecule id="O94788-3"/>
    <property type="nucleotide sequence ID" value="NM_001206897.2"/>
</dbReference>
<dbReference type="RefSeq" id="NP_003879.2">
    <molecule id="O94788-1"/>
    <property type="nucleotide sequence ID" value="NM_003888.3"/>
</dbReference>
<dbReference type="RefSeq" id="NP_733797.1">
    <molecule id="O94788-2"/>
    <property type="nucleotide sequence ID" value="NM_170696.3"/>
</dbReference>
<dbReference type="RefSeq" id="NP_733798.1">
    <molecule id="O94788-4"/>
    <property type="nucleotide sequence ID" value="NM_170697.3"/>
</dbReference>
<dbReference type="PDB" id="4X2Q">
    <property type="method" value="X-ray"/>
    <property type="resolution" value="2.94 A"/>
    <property type="chains" value="A/B/C/D=21-518"/>
</dbReference>
<dbReference type="PDB" id="6ALJ">
    <property type="method" value="X-ray"/>
    <property type="resolution" value="1.89 A"/>
    <property type="chains" value="A/B/C/D=26-518"/>
</dbReference>
<dbReference type="PDB" id="6B5G">
    <property type="method" value="X-ray"/>
    <property type="resolution" value="2.20 A"/>
    <property type="chains" value="A/B/C/D=26-518"/>
</dbReference>
<dbReference type="PDB" id="6B5H">
    <property type="method" value="X-ray"/>
    <property type="resolution" value="2.30 A"/>
    <property type="chains" value="A/B/C/D=26-518"/>
</dbReference>
<dbReference type="PDB" id="6B5I">
    <property type="method" value="X-ray"/>
    <property type="resolution" value="2.60 A"/>
    <property type="chains" value="A/B/C/D=26-518"/>
</dbReference>
<dbReference type="PDBsum" id="4X2Q"/>
<dbReference type="PDBsum" id="6ALJ"/>
<dbReference type="PDBsum" id="6B5G"/>
<dbReference type="PDBsum" id="6B5H"/>
<dbReference type="PDBsum" id="6B5I"/>
<dbReference type="SMR" id="O94788"/>
<dbReference type="BioGRID" id="114379">
    <property type="interactions" value="83"/>
</dbReference>
<dbReference type="FunCoup" id="O94788">
    <property type="interactions" value="642"/>
</dbReference>
<dbReference type="IntAct" id="O94788">
    <property type="interactions" value="25"/>
</dbReference>
<dbReference type="STRING" id="9606.ENSP00000249750"/>
<dbReference type="BindingDB" id="O94788"/>
<dbReference type="ChEMBL" id="CHEMBL3112384"/>
<dbReference type="DrugBank" id="DB00157">
    <property type="generic name" value="NADH"/>
</dbReference>
<dbReference type="DrugBank" id="DB00755">
    <property type="generic name" value="Tretinoin"/>
</dbReference>
<dbReference type="DrugBank" id="DB00162">
    <property type="generic name" value="Vitamin A"/>
</dbReference>
<dbReference type="DrugCentral" id="O94788"/>
<dbReference type="GlyGen" id="O94788">
    <property type="glycosylation" value="3 sites, 1 O-linked glycan (1 site)"/>
</dbReference>
<dbReference type="iPTMnet" id="O94788"/>
<dbReference type="PhosphoSitePlus" id="O94788"/>
<dbReference type="BioMuta" id="ALDH1A2"/>
<dbReference type="jPOST" id="O94788"/>
<dbReference type="MassIVE" id="O94788"/>
<dbReference type="PaxDb" id="9606-ENSP00000249750"/>
<dbReference type="PeptideAtlas" id="O94788"/>
<dbReference type="ProteomicsDB" id="26115"/>
<dbReference type="ProteomicsDB" id="40109"/>
<dbReference type="ProteomicsDB" id="50442">
    <molecule id="O94788-1"/>
</dbReference>
<dbReference type="ProteomicsDB" id="50443">
    <molecule id="O94788-2"/>
</dbReference>
<dbReference type="Pumba" id="O94788"/>
<dbReference type="Antibodypedia" id="2127">
    <property type="antibodies" value="343 antibodies from 33 providers"/>
</dbReference>
<dbReference type="DNASU" id="8854"/>
<dbReference type="Ensembl" id="ENST00000249750.9">
    <molecule id="O94788-1"/>
    <property type="protein sequence ID" value="ENSP00000249750.4"/>
    <property type="gene ID" value="ENSG00000128918.15"/>
</dbReference>
<dbReference type="Ensembl" id="ENST00000347587.7">
    <molecule id="O94788-2"/>
    <property type="protein sequence ID" value="ENSP00000309623.3"/>
    <property type="gene ID" value="ENSG00000128918.15"/>
</dbReference>
<dbReference type="Ensembl" id="ENST00000537372.5">
    <molecule id="O94788-3"/>
    <property type="protein sequence ID" value="ENSP00000438296.1"/>
    <property type="gene ID" value="ENSG00000128918.15"/>
</dbReference>
<dbReference type="Ensembl" id="ENST00000559517.5">
    <molecule id="O94788-4"/>
    <property type="protein sequence ID" value="ENSP00000453408.1"/>
    <property type="gene ID" value="ENSG00000128918.15"/>
</dbReference>
<dbReference type="GeneID" id="8854"/>
<dbReference type="KEGG" id="hsa:8854"/>
<dbReference type="MANE-Select" id="ENST00000249750.9">
    <property type="protein sequence ID" value="ENSP00000249750.4"/>
    <property type="RefSeq nucleotide sequence ID" value="NM_003888.4"/>
    <property type="RefSeq protein sequence ID" value="NP_003879.2"/>
</dbReference>
<dbReference type="UCSC" id="uc002aew.4">
    <molecule id="O94788-1"/>
    <property type="organism name" value="human"/>
</dbReference>
<dbReference type="AGR" id="HGNC:15472"/>
<dbReference type="CTD" id="8854"/>
<dbReference type="DisGeNET" id="8854"/>
<dbReference type="GeneCards" id="ALDH1A2"/>
<dbReference type="HGNC" id="HGNC:15472">
    <property type="gene designation" value="ALDH1A2"/>
</dbReference>
<dbReference type="HPA" id="ENSG00000128918">
    <property type="expression patterns" value="Tissue enhanced (endometrium, fallopian tube)"/>
</dbReference>
<dbReference type="MalaCards" id="ALDH1A2"/>
<dbReference type="MIM" id="603687">
    <property type="type" value="gene"/>
</dbReference>
<dbReference type="MIM" id="620025">
    <property type="type" value="phenotype"/>
</dbReference>
<dbReference type="neXtProt" id="NX_O94788"/>
<dbReference type="OpenTargets" id="ENSG00000128918"/>
<dbReference type="PharmGKB" id="PA24693"/>
<dbReference type="VEuPathDB" id="HostDB:ENSG00000128918"/>
<dbReference type="eggNOG" id="KOG2450">
    <property type="taxonomic scope" value="Eukaryota"/>
</dbReference>
<dbReference type="GeneTree" id="ENSGT00940000158898"/>
<dbReference type="HOGENOM" id="CLU_005391_0_0_1"/>
<dbReference type="InParanoid" id="O94788"/>
<dbReference type="OMA" id="WSNTFNK"/>
<dbReference type="OrthoDB" id="310895at2759"/>
<dbReference type="PAN-GO" id="O94788">
    <property type="GO annotations" value="1 GO annotation based on evolutionary models"/>
</dbReference>
<dbReference type="PhylomeDB" id="O94788"/>
<dbReference type="TreeFam" id="TF300455"/>
<dbReference type="BioCyc" id="MetaCyc:HS05232-MONOMER"/>
<dbReference type="BRENDA" id="1.2.1.36">
    <property type="organism ID" value="2681"/>
</dbReference>
<dbReference type="PathwayCommons" id="O94788"/>
<dbReference type="Reactome" id="R-HSA-5365859">
    <property type="pathway name" value="RA biosynthesis pathway"/>
</dbReference>
<dbReference type="SignaLink" id="O94788"/>
<dbReference type="SIGNOR" id="O94788"/>
<dbReference type="UniPathway" id="UPA00912"/>
<dbReference type="BioGRID-ORCS" id="8854">
    <property type="hits" value="9 hits in 1163 CRISPR screens"/>
</dbReference>
<dbReference type="CD-CODE" id="91857CE7">
    <property type="entry name" value="Nucleolus"/>
</dbReference>
<dbReference type="ChiTaRS" id="ALDH1A2">
    <property type="organism name" value="human"/>
</dbReference>
<dbReference type="EvolutionaryTrace" id="O94788"/>
<dbReference type="GeneWiki" id="ALDH1A2"/>
<dbReference type="GenomeRNAi" id="8854"/>
<dbReference type="Pharos" id="O94788">
    <property type="development level" value="Tchem"/>
</dbReference>
<dbReference type="PRO" id="PR:O94788"/>
<dbReference type="Proteomes" id="UP000005640">
    <property type="component" value="Chromosome 15"/>
</dbReference>
<dbReference type="RNAct" id="O94788">
    <property type="molecule type" value="protein"/>
</dbReference>
<dbReference type="Bgee" id="ENSG00000128918">
    <property type="expression patterns" value="Expressed in germinal epithelium of ovary and 154 other cell types or tissues"/>
</dbReference>
<dbReference type="ExpressionAtlas" id="O94788">
    <property type="expression patterns" value="baseline and differential"/>
</dbReference>
<dbReference type="GO" id="GO:0005737">
    <property type="term" value="C:cytoplasm"/>
    <property type="evidence" value="ECO:0000314"/>
    <property type="project" value="UniProtKB"/>
</dbReference>
<dbReference type="GO" id="GO:0005829">
    <property type="term" value="C:cytosol"/>
    <property type="evidence" value="ECO:0000304"/>
    <property type="project" value="Reactome"/>
</dbReference>
<dbReference type="GO" id="GO:0048471">
    <property type="term" value="C:perinuclear region of cytoplasm"/>
    <property type="evidence" value="ECO:0007669"/>
    <property type="project" value="Ensembl"/>
</dbReference>
<dbReference type="GO" id="GO:0004028">
    <property type="term" value="F:3-chloroallyl aldehyde dehydrogenase activity"/>
    <property type="evidence" value="ECO:0000250"/>
    <property type="project" value="UniProtKB"/>
</dbReference>
<dbReference type="GO" id="GO:0004029">
    <property type="term" value="F:aldehyde dehydrogenase (NAD+) activity"/>
    <property type="evidence" value="ECO:0000318"/>
    <property type="project" value="GO_Central"/>
</dbReference>
<dbReference type="GO" id="GO:0016918">
    <property type="term" value="F:retinal binding"/>
    <property type="evidence" value="ECO:0000250"/>
    <property type="project" value="UniProtKB"/>
</dbReference>
<dbReference type="GO" id="GO:0001758">
    <property type="term" value="F:retinal dehydrogenase activity"/>
    <property type="evidence" value="ECO:0000314"/>
    <property type="project" value="UniProtKB"/>
</dbReference>
<dbReference type="GO" id="GO:0042904">
    <property type="term" value="P:9-cis-retinoic acid biosynthetic process"/>
    <property type="evidence" value="ECO:0007669"/>
    <property type="project" value="Ensembl"/>
</dbReference>
<dbReference type="GO" id="GO:0009952">
    <property type="term" value="P:anterior/posterior pattern specification"/>
    <property type="evidence" value="ECO:0007669"/>
    <property type="project" value="Ensembl"/>
</dbReference>
<dbReference type="GO" id="GO:0001568">
    <property type="term" value="P:blood vessel development"/>
    <property type="evidence" value="ECO:0007669"/>
    <property type="project" value="Ensembl"/>
</dbReference>
<dbReference type="GO" id="GO:0048738">
    <property type="term" value="P:cardiac muscle tissue development"/>
    <property type="evidence" value="ECO:0007669"/>
    <property type="project" value="Ensembl"/>
</dbReference>
<dbReference type="GO" id="GO:0008283">
    <property type="term" value="P:cell population proliferation"/>
    <property type="evidence" value="ECO:0007669"/>
    <property type="project" value="Ensembl"/>
</dbReference>
<dbReference type="GO" id="GO:0071300">
    <property type="term" value="P:cellular response to retinoic acid"/>
    <property type="evidence" value="ECO:0007669"/>
    <property type="project" value="Ensembl"/>
</dbReference>
<dbReference type="GO" id="GO:0009855">
    <property type="term" value="P:determination of bilateral symmetry"/>
    <property type="evidence" value="ECO:0007669"/>
    <property type="project" value="Ensembl"/>
</dbReference>
<dbReference type="GO" id="GO:0031076">
    <property type="term" value="P:embryonic camera-type eye development"/>
    <property type="evidence" value="ECO:0007669"/>
    <property type="project" value="Ensembl"/>
</dbReference>
<dbReference type="GO" id="GO:0048566">
    <property type="term" value="P:embryonic digestive tract development"/>
    <property type="evidence" value="ECO:0007669"/>
    <property type="project" value="Ensembl"/>
</dbReference>
<dbReference type="GO" id="GO:0035115">
    <property type="term" value="P:embryonic forelimb morphogenesis"/>
    <property type="evidence" value="ECO:0007669"/>
    <property type="project" value="Ensembl"/>
</dbReference>
<dbReference type="GO" id="GO:0060324">
    <property type="term" value="P:face development"/>
    <property type="evidence" value="ECO:0007669"/>
    <property type="project" value="Ensembl"/>
</dbReference>
<dbReference type="GO" id="GO:0003007">
    <property type="term" value="P:heart morphogenesis"/>
    <property type="evidence" value="ECO:0007669"/>
    <property type="project" value="Ensembl"/>
</dbReference>
<dbReference type="GO" id="GO:0030902">
    <property type="term" value="P:hindbrain development"/>
    <property type="evidence" value="ECO:0007669"/>
    <property type="project" value="Ensembl"/>
</dbReference>
<dbReference type="GO" id="GO:0001822">
    <property type="term" value="P:kidney development"/>
    <property type="evidence" value="ECO:0007669"/>
    <property type="project" value="Ensembl"/>
</dbReference>
<dbReference type="GO" id="GO:0001889">
    <property type="term" value="P:liver development"/>
    <property type="evidence" value="ECO:0007669"/>
    <property type="project" value="Ensembl"/>
</dbReference>
<dbReference type="GO" id="GO:0030324">
    <property type="term" value="P:lung development"/>
    <property type="evidence" value="ECO:0007669"/>
    <property type="project" value="Ensembl"/>
</dbReference>
<dbReference type="GO" id="GO:0007494">
    <property type="term" value="P:midgut development"/>
    <property type="evidence" value="ECO:0007669"/>
    <property type="project" value="Ensembl"/>
</dbReference>
<dbReference type="GO" id="GO:0016331">
    <property type="term" value="P:morphogenesis of embryonic epithelium"/>
    <property type="evidence" value="ECO:0007669"/>
    <property type="project" value="Ensembl"/>
</dbReference>
<dbReference type="GO" id="GO:0008285">
    <property type="term" value="P:negative regulation of cell population proliferation"/>
    <property type="evidence" value="ECO:0000314"/>
    <property type="project" value="UniProtKB"/>
</dbReference>
<dbReference type="GO" id="GO:0014032">
    <property type="term" value="P:neural crest cell development"/>
    <property type="evidence" value="ECO:0007669"/>
    <property type="project" value="Ensembl"/>
</dbReference>
<dbReference type="GO" id="GO:0021915">
    <property type="term" value="P:neural tube development"/>
    <property type="evidence" value="ECO:0000315"/>
    <property type="project" value="UniProtKB"/>
</dbReference>
<dbReference type="GO" id="GO:0030182">
    <property type="term" value="P:neuron differentiation"/>
    <property type="evidence" value="ECO:0007669"/>
    <property type="project" value="Ensembl"/>
</dbReference>
<dbReference type="GO" id="GO:0031016">
    <property type="term" value="P:pancreas development"/>
    <property type="evidence" value="ECO:0007669"/>
    <property type="project" value="Ensembl"/>
</dbReference>
<dbReference type="GO" id="GO:0021983">
    <property type="term" value="P:pituitary gland development"/>
    <property type="evidence" value="ECO:0007669"/>
    <property type="project" value="Ensembl"/>
</dbReference>
<dbReference type="GO" id="GO:0043065">
    <property type="term" value="P:positive regulation of apoptotic process"/>
    <property type="evidence" value="ECO:0007669"/>
    <property type="project" value="Ensembl"/>
</dbReference>
<dbReference type="GO" id="GO:0008284">
    <property type="term" value="P:positive regulation of cell population proliferation"/>
    <property type="evidence" value="ECO:0007669"/>
    <property type="project" value="Ensembl"/>
</dbReference>
<dbReference type="GO" id="GO:0010628">
    <property type="term" value="P:positive regulation of gene expression"/>
    <property type="evidence" value="ECO:0007669"/>
    <property type="project" value="Ensembl"/>
</dbReference>
<dbReference type="GO" id="GO:0051289">
    <property type="term" value="P:protein homotetramerization"/>
    <property type="evidence" value="ECO:0000314"/>
    <property type="project" value="UniProtKB"/>
</dbReference>
<dbReference type="GO" id="GO:0009954">
    <property type="term" value="P:proximal/distal pattern formation"/>
    <property type="evidence" value="ECO:0007669"/>
    <property type="project" value="Ensembl"/>
</dbReference>
<dbReference type="GO" id="GO:1905562">
    <property type="term" value="P:regulation of vascular endothelial cell proliferation"/>
    <property type="evidence" value="ECO:0007669"/>
    <property type="project" value="Ensembl"/>
</dbReference>
<dbReference type="GO" id="GO:0034097">
    <property type="term" value="P:response to cytokine"/>
    <property type="evidence" value="ECO:0000314"/>
    <property type="project" value="UniProtKB"/>
</dbReference>
<dbReference type="GO" id="GO:0032355">
    <property type="term" value="P:response to estradiol"/>
    <property type="evidence" value="ECO:0007669"/>
    <property type="project" value="Ensembl"/>
</dbReference>
<dbReference type="GO" id="GO:0032526">
    <property type="term" value="P:response to retinoic acid"/>
    <property type="evidence" value="ECO:0000315"/>
    <property type="project" value="UniProtKB"/>
</dbReference>
<dbReference type="GO" id="GO:0033189">
    <property type="term" value="P:response to vitamin A"/>
    <property type="evidence" value="ECO:0007669"/>
    <property type="project" value="Ensembl"/>
</dbReference>
<dbReference type="GO" id="GO:0042574">
    <property type="term" value="P:retinal metabolic process"/>
    <property type="evidence" value="ECO:0007669"/>
    <property type="project" value="Ensembl"/>
</dbReference>
<dbReference type="GO" id="GO:0002138">
    <property type="term" value="P:retinoic acid biosynthetic process"/>
    <property type="evidence" value="ECO:0000314"/>
    <property type="project" value="UniProtKB"/>
</dbReference>
<dbReference type="GO" id="GO:0042573">
    <property type="term" value="P:retinoic acid metabolic process"/>
    <property type="evidence" value="ECO:0000315"/>
    <property type="project" value="UniProtKB"/>
</dbReference>
<dbReference type="GO" id="GO:0048384">
    <property type="term" value="P:retinoic acid receptor signaling pathway"/>
    <property type="evidence" value="ECO:0007669"/>
    <property type="project" value="Ensembl"/>
</dbReference>
<dbReference type="GO" id="GO:0042572">
    <property type="term" value="P:retinol metabolic process"/>
    <property type="evidence" value="ECO:0007669"/>
    <property type="project" value="UniProtKB-UniPathway"/>
</dbReference>
<dbReference type="GO" id="GO:0035799">
    <property type="term" value="P:ureter maturation"/>
    <property type="evidence" value="ECO:0007669"/>
    <property type="project" value="Ensembl"/>
</dbReference>
<dbReference type="GO" id="GO:0006776">
    <property type="term" value="P:vitamin A metabolic process"/>
    <property type="evidence" value="ECO:0000303"/>
    <property type="project" value="UniProtKB"/>
</dbReference>
<dbReference type="CDD" id="cd07141">
    <property type="entry name" value="ALDH_F1AB_F2_RALDH1"/>
    <property type="match status" value="1"/>
</dbReference>
<dbReference type="FunFam" id="3.40.605.10:FF:000050">
    <property type="entry name" value="Aldehyde dehydrogenase, mitochondrial"/>
    <property type="match status" value="1"/>
</dbReference>
<dbReference type="FunFam" id="3.40.309.10:FF:000001">
    <property type="entry name" value="Mitochondrial aldehyde dehydrogenase 2"/>
    <property type="match status" value="1"/>
</dbReference>
<dbReference type="Gene3D" id="3.40.605.10">
    <property type="entry name" value="Aldehyde Dehydrogenase, Chain A, domain 1"/>
    <property type="match status" value="1"/>
</dbReference>
<dbReference type="Gene3D" id="3.40.309.10">
    <property type="entry name" value="Aldehyde Dehydrogenase, Chain A, domain 2"/>
    <property type="match status" value="1"/>
</dbReference>
<dbReference type="InterPro" id="IPR016161">
    <property type="entry name" value="Ald_DH/histidinol_DH"/>
</dbReference>
<dbReference type="InterPro" id="IPR016163">
    <property type="entry name" value="Ald_DH_C"/>
</dbReference>
<dbReference type="InterPro" id="IPR016160">
    <property type="entry name" value="Ald_DH_CS_CYS"/>
</dbReference>
<dbReference type="InterPro" id="IPR029510">
    <property type="entry name" value="Ald_DH_CS_GLU"/>
</dbReference>
<dbReference type="InterPro" id="IPR016162">
    <property type="entry name" value="Ald_DH_N"/>
</dbReference>
<dbReference type="InterPro" id="IPR015590">
    <property type="entry name" value="Aldehyde_DH_dom"/>
</dbReference>
<dbReference type="PANTHER" id="PTHR11699">
    <property type="entry name" value="ALDEHYDE DEHYDROGENASE-RELATED"/>
    <property type="match status" value="1"/>
</dbReference>
<dbReference type="Pfam" id="PF00171">
    <property type="entry name" value="Aldedh"/>
    <property type="match status" value="1"/>
</dbReference>
<dbReference type="SUPFAM" id="SSF53720">
    <property type="entry name" value="ALDH-like"/>
    <property type="match status" value="1"/>
</dbReference>
<dbReference type="PROSITE" id="PS00070">
    <property type="entry name" value="ALDEHYDE_DEHYDR_CYS"/>
    <property type="match status" value="1"/>
</dbReference>
<dbReference type="PROSITE" id="PS00687">
    <property type="entry name" value="ALDEHYDE_DEHYDR_GLU"/>
    <property type="match status" value="1"/>
</dbReference>
<evidence type="ECO:0000250" key="1"/>
<evidence type="ECO:0000250" key="2">
    <source>
        <dbReference type="UniProtKB" id="Q62148"/>
    </source>
</evidence>
<evidence type="ECO:0000250" key="3">
    <source>
        <dbReference type="UniProtKB" id="Q63639"/>
    </source>
</evidence>
<evidence type="ECO:0000255" key="4">
    <source>
        <dbReference type="PROSITE-ProRule" id="PRU10007"/>
    </source>
</evidence>
<evidence type="ECO:0000255" key="5">
    <source>
        <dbReference type="PROSITE-ProRule" id="PRU10008"/>
    </source>
</evidence>
<evidence type="ECO:0000269" key="6">
    <source>
    </source>
</evidence>
<evidence type="ECO:0000269" key="7">
    <source>
    </source>
</evidence>
<evidence type="ECO:0000269" key="8">
    <source>
    </source>
</evidence>
<evidence type="ECO:0000269" key="9">
    <source>
    </source>
</evidence>
<evidence type="ECO:0000269" key="10">
    <source>
    </source>
</evidence>
<evidence type="ECO:0000269" key="11">
    <source>
    </source>
</evidence>
<evidence type="ECO:0000269" key="12">
    <source ref="3"/>
</evidence>
<evidence type="ECO:0000303" key="13">
    <source>
    </source>
</evidence>
<evidence type="ECO:0000303" key="14">
    <source>
    </source>
</evidence>
<evidence type="ECO:0000303" key="15">
    <source>
    </source>
</evidence>
<evidence type="ECO:0000303" key="16">
    <source>
    </source>
</evidence>
<evidence type="ECO:0000305" key="17"/>
<evidence type="ECO:0000305" key="18">
    <source>
    </source>
</evidence>
<evidence type="ECO:0007744" key="19">
    <source>
        <dbReference type="PDB" id="4X2Q"/>
    </source>
</evidence>
<evidence type="ECO:0007744" key="20">
    <source>
        <dbReference type="PDB" id="6ALJ"/>
    </source>
</evidence>
<evidence type="ECO:0007744" key="21">
    <source>
        <dbReference type="PDB" id="6B5G"/>
    </source>
</evidence>
<evidence type="ECO:0007744" key="22">
    <source>
        <dbReference type="PDB" id="6B5H"/>
    </source>
</evidence>
<evidence type="ECO:0007744" key="23">
    <source>
        <dbReference type="PDB" id="6B5I"/>
    </source>
</evidence>
<evidence type="ECO:0007744" key="24">
    <source>
    </source>
</evidence>
<evidence type="ECO:0007829" key="25">
    <source>
        <dbReference type="PDB" id="6ALJ"/>
    </source>
</evidence>
<evidence type="ECO:0007829" key="26">
    <source>
        <dbReference type="PDB" id="6B5I"/>
    </source>
</evidence>
<comment type="function">
    <text evidence="3 8 9 18">Catalyzes the NAD-dependent oxidation of aldehyde substrates, such as all-trans-retinal and all-trans-13,14-dihydroretinal, to their corresponding carboxylic acids, all-trans-retinoate and all-trans-13,14-dihydroretinoate, respectively (PubMed:29240402, PubMed:33565183). Retinoate signaling is critical for the transcriptional control of many genes, for instance it is crucial for initiation of meiosis in both male and female (Probable) (PubMed:33565183). Recognizes retinal as substrate, both in its free form and when bound to cellular retinol-binding protein (By similarity). Can metabolize octanal and decanal, but has only very low activity with benzaldehyde, acetaldehyde and propanal (By similarity). Displays complete lack of activity with citral (By similarity).</text>
</comment>
<comment type="catalytic activity">
    <reaction evidence="8 9">
        <text>retinal + NAD(+) + H2O = retinoate + NADH + 2 H(+)</text>
        <dbReference type="Rhea" id="RHEA:16177"/>
        <dbReference type="ChEBI" id="CHEBI:15035"/>
        <dbReference type="ChEBI" id="CHEBI:15036"/>
        <dbReference type="ChEBI" id="CHEBI:15377"/>
        <dbReference type="ChEBI" id="CHEBI:15378"/>
        <dbReference type="ChEBI" id="CHEBI:57540"/>
        <dbReference type="ChEBI" id="CHEBI:57945"/>
        <dbReference type="EC" id="1.2.1.36"/>
    </reaction>
    <physiologicalReaction direction="left-to-right" evidence="8 9">
        <dbReference type="Rhea" id="RHEA:16178"/>
    </physiologicalReaction>
</comment>
<comment type="catalytic activity">
    <reaction evidence="2">
        <text>all-trans-retinal + NAD(+) + H2O = all-trans-retinoate + NADH + 2 H(+)</text>
        <dbReference type="Rhea" id="RHEA:42080"/>
        <dbReference type="ChEBI" id="CHEBI:15377"/>
        <dbReference type="ChEBI" id="CHEBI:15378"/>
        <dbReference type="ChEBI" id="CHEBI:17898"/>
        <dbReference type="ChEBI" id="CHEBI:35291"/>
        <dbReference type="ChEBI" id="CHEBI:57540"/>
        <dbReference type="ChEBI" id="CHEBI:57945"/>
        <dbReference type="EC" id="1.2.1.36"/>
    </reaction>
    <physiologicalReaction direction="left-to-right" evidence="2">
        <dbReference type="Rhea" id="RHEA:42081"/>
    </physiologicalReaction>
</comment>
<comment type="catalytic activity">
    <reaction evidence="2">
        <text>all-trans-13,14-dihydroretinal + NAD(+) + H2O = all-trans-13,14-dihydroretinoate + NADH + 2 H(+)</text>
        <dbReference type="Rhea" id="RHEA:75119"/>
        <dbReference type="ChEBI" id="CHEBI:15377"/>
        <dbReference type="ChEBI" id="CHEBI:15378"/>
        <dbReference type="ChEBI" id="CHEBI:57540"/>
        <dbReference type="ChEBI" id="CHEBI:57945"/>
        <dbReference type="ChEBI" id="CHEBI:194182"/>
        <dbReference type="ChEBI" id="CHEBI:194183"/>
    </reaction>
    <physiologicalReaction direction="left-to-right" evidence="2">
        <dbReference type="Rhea" id="RHEA:75120"/>
    </physiologicalReaction>
</comment>
<comment type="pathway">
    <text evidence="8">Cofactor metabolism; retinol metabolism.</text>
</comment>
<comment type="subunit">
    <text evidence="8">Homotetramer.</text>
</comment>
<comment type="subcellular location">
    <subcellularLocation>
        <location>Cytoplasm</location>
    </subcellularLocation>
</comment>
<comment type="alternative products">
    <event type="alternative splicing"/>
    <isoform>
        <id>O94788-1</id>
        <name>1</name>
        <sequence type="displayed"/>
    </isoform>
    <isoform>
        <id>O94788-2</id>
        <name>2</name>
        <sequence type="described" ref="VSP_017363"/>
    </isoform>
    <isoform>
        <id>O94788-3</id>
        <name>3</name>
        <sequence type="described" ref="VSP_044496"/>
    </isoform>
    <isoform>
        <id>O94788-4</id>
        <name>4</name>
        <sequence type="described" ref="VSP_047259"/>
    </isoform>
</comment>
<comment type="disease" evidence="9 10">
    <disease id="DI-06500">
        <name>Diaphragmatic hernia 4, with cardiovascular defects</name>
        <acronym>DIH4</acronym>
        <description>An autosomal recessive form of congenital diaphragmatic hernia, a posterolateral defect of the diaphragm, generally located on the left side, that permits the herniation of abdominal viscera into the thorax. The lungs are hypoplastic and have abnormal vessels that cause respiratory insufficiency and persistent pulmonary hypertension with high mortality. About one third of cases have cardiovascular malformations and lesser proportions have skeletal, neural, genitourinary, gastrointestinal or other defects.</description>
        <dbReference type="MIM" id="620025"/>
    </disease>
    <text>The disease is caused by variants affecting the gene represented in this entry.</text>
</comment>
<comment type="similarity">
    <text evidence="17">Belongs to the aldehyde dehydrogenase family.</text>
</comment>
<proteinExistence type="evidence at protein level"/>
<gene>
    <name type="primary">ALDH1A2</name>
    <name type="synonym">RALDH2</name>
</gene>
<feature type="chain" id="PRO_0000056422" description="Retinal dehydrogenase 2">
    <location>
        <begin position="1"/>
        <end position="518"/>
    </location>
</feature>
<feature type="active site" description="Proton acceptor" evidence="4 5">
    <location>
        <position position="286"/>
    </location>
</feature>
<feature type="active site" description="Nucleophile" evidence="4 5 8">
    <location>
        <position position="320"/>
    </location>
</feature>
<feature type="binding site" evidence="8 19 20 21 22">
    <location>
        <begin position="184"/>
        <end position="186"/>
    </location>
    <ligand>
        <name>NAD(+)</name>
        <dbReference type="ChEBI" id="CHEBI:57540"/>
    </ligand>
</feature>
<feature type="binding site" evidence="8 19 20 21 22">
    <location>
        <begin position="210"/>
        <end position="213"/>
    </location>
    <ligand>
        <name>NAD(+)</name>
        <dbReference type="ChEBI" id="CHEBI:57540"/>
    </ligand>
</feature>
<feature type="binding site" evidence="8 20 21 22">
    <location>
        <begin position="264"/>
        <end position="266"/>
    </location>
    <ligand>
        <name>NAD(+)</name>
        <dbReference type="ChEBI" id="CHEBI:57540"/>
    </ligand>
</feature>
<feature type="binding site" evidence="8 20 21 22">
    <location>
        <begin position="366"/>
        <end position="370"/>
    </location>
    <ligand>
        <name>NAD(+)</name>
        <dbReference type="ChEBI" id="CHEBI:57540"/>
    </ligand>
</feature>
<feature type="binding site" evidence="8 20 21 22">
    <location>
        <position position="417"/>
    </location>
    <ligand>
        <name>NAD(+)</name>
        <dbReference type="ChEBI" id="CHEBI:57540"/>
    </ligand>
</feature>
<feature type="site" description="Transition state stabilizer" evidence="1">
    <location>
        <position position="187"/>
    </location>
</feature>
<feature type="modified residue" description="Phosphotyrosine" evidence="24">
    <location>
        <position position="168"/>
    </location>
</feature>
<feature type="modified residue" description="Phosphoserine" evidence="24">
    <location>
        <position position="351"/>
    </location>
</feature>
<feature type="splice variant" id="VSP_047259" description="In isoform 4." evidence="16">
    <location>
        <begin position="1"/>
        <end position="96"/>
    </location>
</feature>
<feature type="splice variant" id="VSP_044496" description="In isoform 3." evidence="13">
    <original>MTSSKIEMPGEVKADPAALMASLHLLPSPTPNLEIKYTK</original>
    <variation>MKNQCETVWLKSPIKLKL</variation>
    <location>
        <begin position="1"/>
        <end position="39"/>
    </location>
</feature>
<feature type="splice variant" id="VSP_017363" description="In isoform 2." evidence="14">
    <location>
        <begin position="229"/>
        <end position="266"/>
    </location>
</feature>
<feature type="sequence variant" id="VAR_025439" description="In dbSNP:rs34266719." evidence="12">
    <original>E</original>
    <variation>G</variation>
    <location>
        <position position="50"/>
    </location>
</feature>
<feature type="sequence variant" id="VAR_025440" description="In dbSNP:rs35365164." evidence="12">
    <original>A</original>
    <variation>V</variation>
    <location>
        <position position="110"/>
    </location>
</feature>
<feature type="sequence variant" id="VAR_087721" description="In DIH4; decreased retinoic acid biosynthetic process." evidence="9">
    <original>Q</original>
    <variation>K</variation>
    <location>
        <position position="182"/>
    </location>
</feature>
<feature type="sequence variant" id="VAR_087722" description="In DIH4; decreased expression; dbSNP:rs141245344." evidence="9 10">
    <original>R</original>
    <variation>H</variation>
    <location>
        <position position="347"/>
    </location>
</feature>
<feature type="sequence variant" id="VAR_025441" description="In dbSNP:rs4646626." evidence="6 7 11 12">
    <original>V</original>
    <variation>I</variation>
    <location>
        <position position="348"/>
    </location>
</feature>
<feature type="sequence variant" id="VAR_087723" description="In DIH4; uncertain significance; dbSNP:rs749124508." evidence="9">
    <original>A</original>
    <variation>T</variation>
    <location>
        <position position="383"/>
    </location>
</feature>
<feature type="sequence variant" id="VAR_025442" description="In dbSNP:rs34744827." evidence="12">
    <original>E</original>
    <variation>K</variation>
    <location>
        <position position="436"/>
    </location>
</feature>
<feature type="sequence variant" id="VAR_087724" description="In DIH4; decreased retinoic acid biosynthetic process." evidence="9">
    <original>S</original>
    <variation>Y</variation>
    <location>
        <position position="461"/>
    </location>
</feature>
<feature type="sequence conflict" description="In Ref. 2; BAG64174." evidence="17" ref="2">
    <original>F</original>
    <variation>L</variation>
    <location>
        <position position="231"/>
    </location>
</feature>
<feature type="strand" evidence="25">
    <location>
        <begin position="39"/>
        <end position="42"/>
    </location>
</feature>
<feature type="strand" evidence="25">
    <location>
        <begin position="45"/>
        <end position="47"/>
    </location>
</feature>
<feature type="strand" evidence="25">
    <location>
        <begin position="54"/>
        <end position="58"/>
    </location>
</feature>
<feature type="turn" evidence="25">
    <location>
        <begin position="60"/>
        <end position="62"/>
    </location>
</feature>
<feature type="strand" evidence="25">
    <location>
        <begin position="65"/>
        <end position="70"/>
    </location>
</feature>
<feature type="helix" evidence="25">
    <location>
        <begin position="74"/>
        <end position="87"/>
    </location>
</feature>
<feature type="helix" evidence="25">
    <location>
        <begin position="93"/>
        <end position="96"/>
    </location>
</feature>
<feature type="helix" evidence="25">
    <location>
        <begin position="99"/>
        <end position="115"/>
    </location>
</feature>
<feature type="helix" evidence="25">
    <location>
        <begin position="117"/>
        <end position="128"/>
    </location>
</feature>
<feature type="helix" evidence="25">
    <location>
        <begin position="132"/>
        <end position="137"/>
    </location>
</feature>
<feature type="helix" evidence="25">
    <location>
        <begin position="139"/>
        <end position="151"/>
    </location>
</feature>
<feature type="helix" evidence="25">
    <location>
        <begin position="154"/>
        <end position="156"/>
    </location>
</feature>
<feature type="strand" evidence="25">
    <location>
        <begin position="159"/>
        <end position="162"/>
    </location>
</feature>
<feature type="strand" evidence="25">
    <location>
        <begin position="165"/>
        <end position="176"/>
    </location>
</feature>
<feature type="strand" evidence="25">
    <location>
        <begin position="178"/>
        <end position="183"/>
    </location>
</feature>
<feature type="strand" evidence="25">
    <location>
        <begin position="186"/>
        <end position="188"/>
    </location>
</feature>
<feature type="helix" evidence="25">
    <location>
        <begin position="189"/>
        <end position="202"/>
    </location>
</feature>
<feature type="strand" evidence="25">
    <location>
        <begin position="206"/>
        <end position="210"/>
    </location>
</feature>
<feature type="strand" evidence="26">
    <location>
        <begin position="213"/>
        <end position="215"/>
    </location>
</feature>
<feature type="helix" evidence="25">
    <location>
        <begin position="217"/>
        <end position="229"/>
    </location>
</feature>
<feature type="strand" evidence="25">
    <location>
        <begin position="235"/>
        <end position="238"/>
    </location>
</feature>
<feature type="turn" evidence="25">
    <location>
        <begin position="243"/>
        <end position="245"/>
    </location>
</feature>
<feature type="helix" evidence="25">
    <location>
        <begin position="246"/>
        <end position="251"/>
    </location>
</feature>
<feature type="strand" evidence="25">
    <location>
        <begin position="258"/>
        <end position="263"/>
    </location>
</feature>
<feature type="helix" evidence="25">
    <location>
        <begin position="265"/>
        <end position="277"/>
    </location>
</feature>
<feature type="strand" evidence="25">
    <location>
        <begin position="282"/>
        <end position="286"/>
    </location>
</feature>
<feature type="strand" evidence="25">
    <location>
        <begin position="292"/>
        <end position="295"/>
    </location>
</feature>
<feature type="helix" evidence="25">
    <location>
        <begin position="301"/>
        <end position="313"/>
    </location>
</feature>
<feature type="helix" evidence="25">
    <location>
        <begin position="314"/>
        <end position="317"/>
    </location>
</feature>
<feature type="strand" evidence="25">
    <location>
        <begin position="325"/>
        <end position="329"/>
    </location>
</feature>
<feature type="helix" evidence="25">
    <location>
        <begin position="330"/>
        <end position="346"/>
    </location>
</feature>
<feature type="helix" evidence="25">
    <location>
        <begin position="365"/>
        <end position="380"/>
    </location>
</feature>
<feature type="strand" evidence="25">
    <location>
        <begin position="384"/>
        <end position="387"/>
    </location>
</feature>
<feature type="strand" evidence="25">
    <location>
        <begin position="393"/>
        <end position="396"/>
    </location>
</feature>
<feature type="strand" evidence="25">
    <location>
        <begin position="402"/>
        <end position="406"/>
    </location>
</feature>
<feature type="helix" evidence="25">
    <location>
        <begin position="412"/>
        <end position="415"/>
    </location>
</feature>
<feature type="strand" evidence="25">
    <location>
        <begin position="420"/>
        <end position="428"/>
    </location>
</feature>
<feature type="helix" evidence="25">
    <location>
        <begin position="431"/>
        <end position="439"/>
    </location>
</feature>
<feature type="strand" evidence="25">
    <location>
        <begin position="441"/>
        <end position="450"/>
    </location>
</feature>
<feature type="helix" evidence="25">
    <location>
        <begin position="454"/>
        <end position="463"/>
    </location>
</feature>
<feature type="strand" evidence="25">
    <location>
        <begin position="466"/>
        <end position="472"/>
    </location>
</feature>
<feature type="strand" evidence="26">
    <location>
        <begin position="479"/>
        <end position="481"/>
    </location>
</feature>
<feature type="strand" evidence="25">
    <location>
        <begin position="490"/>
        <end position="492"/>
    </location>
</feature>
<feature type="helix" evidence="25">
    <location>
        <begin position="498"/>
        <end position="503"/>
    </location>
</feature>
<feature type="strand" evidence="25">
    <location>
        <begin position="504"/>
        <end position="512"/>
    </location>
</feature>
<organism>
    <name type="scientific">Homo sapiens</name>
    <name type="common">Human</name>
    <dbReference type="NCBI Taxonomy" id="9606"/>
    <lineage>
        <taxon>Eukaryota</taxon>
        <taxon>Metazoa</taxon>
        <taxon>Chordata</taxon>
        <taxon>Craniata</taxon>
        <taxon>Vertebrata</taxon>
        <taxon>Euteleostomi</taxon>
        <taxon>Mammalia</taxon>
        <taxon>Eutheria</taxon>
        <taxon>Euarchontoglires</taxon>
        <taxon>Primates</taxon>
        <taxon>Haplorrhini</taxon>
        <taxon>Catarrhini</taxon>
        <taxon>Hominidae</taxon>
        <taxon>Homo</taxon>
    </lineage>
</organism>
<accession>O94788</accession>
<accession>B3KY52</accession>
<accession>B4DZR2</accession>
<accession>F5H2Y9</accession>
<accession>H0YM00</accession>
<accession>Q2PJS6</accession>
<accession>Q8NHQ4</accession>
<accession>Q9UBR8</accession>
<accession>Q9UFY0</accession>
<sequence length="518" mass="56724">MTSSKIEMPGEVKADPAALMASLHLLPSPTPNLEIKYTKIFINNEWQNSESGRVFPVYNPATGEQVCEVQEADKADIDKAVQAARLAFSLGSVWRRMDASERGRLLDKLADLVERDRAVLATMESLNGGKPFLQAFYVDLQGVIKTFRYYAGWADKIHGMTIPVDGDYFTFTRHEPIGVCGQIIPWNFPLLMFAWKIAPALCCGNTVVIKPAEQTPLSALYMGALIKEAGFPPGVINILPGYGPTAGAAIASHIGIDKIAFTGSTEVGKLIQEAAGRSNLKRVTLELGGKSPNIIFADADLDYAVEQAHQGVFFNQGQCCTAGSRIFVEESIYEEFVRRSVERAKRRVVGSPFDPTTEQGPQIDKKQYNKILELIQSGVAEGAKLECGGKGLGRKGFFIEPTVFSNVTDDMRIAKEEIFGPVQEILRFKTMDEVIERANNSDFGLVAAVFTNDINKALTVSSAMQAGTVWINCYNALNAQSPFGGFKMSGNGREMGEFGLREYSEVKTVTVKIPQKNS</sequence>
<protein>
    <recommendedName>
        <fullName>Retinal dehydrogenase 2</fullName>
        <shortName>RALDH 2</shortName>
        <shortName evidence="16">RalDH2</shortName>
        <ecNumber evidence="8">1.2.1.36</ecNumber>
    </recommendedName>
    <alternativeName>
        <fullName>Aldehyde dehydrogenase family 1 member A2</fullName>
        <shortName evidence="15">ALDH1A2</shortName>
    </alternativeName>
    <alternativeName>
        <fullName>Retinaldehyde-specific dehydrogenase type 2</fullName>
        <shortName>RALDH(II)</shortName>
    </alternativeName>
</protein>